<gene>
    <name type="primary">qutD</name>
    <name type="ORF">ACLA_024060</name>
</gene>
<dbReference type="EMBL" id="DS027059">
    <property type="protein sequence ID" value="EAW07691.1"/>
    <property type="molecule type" value="Genomic_DNA"/>
</dbReference>
<dbReference type="RefSeq" id="XP_001269117.1">
    <property type="nucleotide sequence ID" value="XM_001269116.1"/>
</dbReference>
<dbReference type="SMR" id="A1CPX0"/>
<dbReference type="STRING" id="344612.A1CPX0"/>
<dbReference type="EnsemblFungi" id="EAW07691">
    <property type="protein sequence ID" value="EAW07691"/>
    <property type="gene ID" value="ACLA_024060"/>
</dbReference>
<dbReference type="GeneID" id="4701292"/>
<dbReference type="KEGG" id="act:ACLA_024060"/>
<dbReference type="VEuPathDB" id="FungiDB:ACLA_024060"/>
<dbReference type="eggNOG" id="KOG0254">
    <property type="taxonomic scope" value="Eukaryota"/>
</dbReference>
<dbReference type="HOGENOM" id="CLU_001265_30_12_1"/>
<dbReference type="OMA" id="PADHIYM"/>
<dbReference type="OrthoDB" id="508119at2759"/>
<dbReference type="Proteomes" id="UP000006701">
    <property type="component" value="Unassembled WGS sequence"/>
</dbReference>
<dbReference type="GO" id="GO:0005886">
    <property type="term" value="C:plasma membrane"/>
    <property type="evidence" value="ECO:0007669"/>
    <property type="project" value="UniProtKB-SubCell"/>
</dbReference>
<dbReference type="GO" id="GO:0005351">
    <property type="term" value="F:carbohydrate:proton symporter activity"/>
    <property type="evidence" value="ECO:0007669"/>
    <property type="project" value="TreeGrafter"/>
</dbReference>
<dbReference type="GO" id="GO:0019630">
    <property type="term" value="P:quinate metabolic process"/>
    <property type="evidence" value="ECO:0007669"/>
    <property type="project" value="UniProtKB-KW"/>
</dbReference>
<dbReference type="FunFam" id="1.20.1250.20:FF:000026">
    <property type="entry name" value="MFS quinate transporter QutD"/>
    <property type="match status" value="1"/>
</dbReference>
<dbReference type="Gene3D" id="1.20.1250.20">
    <property type="entry name" value="MFS general substrate transporter like domains"/>
    <property type="match status" value="1"/>
</dbReference>
<dbReference type="InterPro" id="IPR020846">
    <property type="entry name" value="MFS_dom"/>
</dbReference>
<dbReference type="InterPro" id="IPR005828">
    <property type="entry name" value="MFS_sugar_transport-like"/>
</dbReference>
<dbReference type="InterPro" id="IPR050360">
    <property type="entry name" value="MFS_Sugar_Transporters"/>
</dbReference>
<dbReference type="InterPro" id="IPR036259">
    <property type="entry name" value="MFS_trans_sf"/>
</dbReference>
<dbReference type="InterPro" id="IPR003663">
    <property type="entry name" value="Sugar/inositol_transpt"/>
</dbReference>
<dbReference type="InterPro" id="IPR005829">
    <property type="entry name" value="Sugar_transporter_CS"/>
</dbReference>
<dbReference type="NCBIfam" id="TIGR00879">
    <property type="entry name" value="SP"/>
    <property type="match status" value="1"/>
</dbReference>
<dbReference type="PANTHER" id="PTHR48022:SF34">
    <property type="entry name" value="MAJOR FACILITATOR SUPERFAMILY (MFS) PROFILE DOMAIN-CONTAINING PROTEIN-RELATED"/>
    <property type="match status" value="1"/>
</dbReference>
<dbReference type="PANTHER" id="PTHR48022">
    <property type="entry name" value="PLASTIDIC GLUCOSE TRANSPORTER 4"/>
    <property type="match status" value="1"/>
</dbReference>
<dbReference type="Pfam" id="PF00083">
    <property type="entry name" value="Sugar_tr"/>
    <property type="match status" value="1"/>
</dbReference>
<dbReference type="PRINTS" id="PR00171">
    <property type="entry name" value="SUGRTRNSPORT"/>
</dbReference>
<dbReference type="SUPFAM" id="SSF103473">
    <property type="entry name" value="MFS general substrate transporter"/>
    <property type="match status" value="1"/>
</dbReference>
<dbReference type="PROSITE" id="PS50850">
    <property type="entry name" value="MFS"/>
    <property type="match status" value="1"/>
</dbReference>
<dbReference type="PROSITE" id="PS00216">
    <property type="entry name" value="SUGAR_TRANSPORT_1"/>
    <property type="match status" value="1"/>
</dbReference>
<dbReference type="PROSITE" id="PS00217">
    <property type="entry name" value="SUGAR_TRANSPORT_2"/>
    <property type="match status" value="1"/>
</dbReference>
<sequence length="540" mass="59962">MSILALVEDRPTPKEVYNWRIYLLAAVASFTSCMIGYDSAFIGTTLALGSFREEFEFTTMEPAAVNRVSANIVSCYQAGAFFGAFFAYPIGHFWGRKWGLLSAAAIFTLGAGLMLGANGDRGLGLIYGGRVLAGIGVGAGSNITPIYISELAPPSIRGHLVGVYELGWQIGGLVGFWINYGVSETLAPSHKQWIIPFAVQLIPSGLLLIGAVFLRESPRWLFSSDRREEAIENLCWIRQLPADHIYMIEEIGAIDQALEEQRSTIGLGFWKPFKAAGTNKKVMYRLFLGSMLFFWQNGSGINAINYYSPTVFKSIGLRGTNTGMFSTGIFGVVKTVVTFIWLLYLIDRMGRRLLLLVGAAGASVCLWIVGAYIKIANPAKNGNGEMTGGGIAAMFFFYLYTVFYTPSWNGTPWVMNSEMFEPNMRSLAQACAAASNWLWNFLISRFTPQMFDKMGYGVWFFFASLMLCSIVIVFFLIPETKGIPLESMDALFETKPIWRAHGIVLAKLREDEEQFRQDIEESGYTKSGEQRLESVQPKEA</sequence>
<feature type="chain" id="PRO_0000395712" description="Probable quinate permease">
    <location>
        <begin position="1"/>
        <end position="540"/>
    </location>
</feature>
<feature type="topological domain" description="Cytoplasmic" evidence="2">
    <location>
        <begin position="1"/>
        <end position="22"/>
    </location>
</feature>
<feature type="transmembrane region" description="Helical" evidence="2">
    <location>
        <begin position="23"/>
        <end position="43"/>
    </location>
</feature>
<feature type="topological domain" description="Extracellular" evidence="2">
    <location>
        <begin position="44"/>
        <end position="74"/>
    </location>
</feature>
<feature type="transmembrane region" description="Helical" evidence="2">
    <location>
        <begin position="75"/>
        <end position="95"/>
    </location>
</feature>
<feature type="topological domain" description="Cytoplasmic" evidence="2">
    <location>
        <begin position="96"/>
        <end position="97"/>
    </location>
</feature>
<feature type="transmembrane region" description="Helical" evidence="2">
    <location>
        <begin position="98"/>
        <end position="118"/>
    </location>
</feature>
<feature type="topological domain" description="Extracellular" evidence="2">
    <location>
        <begin position="119"/>
        <end position="130"/>
    </location>
</feature>
<feature type="transmembrane region" description="Helical" evidence="2">
    <location>
        <begin position="131"/>
        <end position="151"/>
    </location>
</feature>
<feature type="topological domain" description="Cytoplasmic" evidence="2">
    <location>
        <begin position="152"/>
        <end position="157"/>
    </location>
</feature>
<feature type="transmembrane region" description="Helical" evidence="2">
    <location>
        <begin position="158"/>
        <end position="178"/>
    </location>
</feature>
<feature type="topological domain" description="Extracellular" evidence="2">
    <location>
        <begin position="179"/>
        <end position="193"/>
    </location>
</feature>
<feature type="transmembrane region" description="Helical" evidence="2">
    <location>
        <begin position="194"/>
        <end position="214"/>
    </location>
</feature>
<feature type="topological domain" description="Cytoplasmic" evidence="2">
    <location>
        <begin position="215"/>
        <end position="285"/>
    </location>
</feature>
<feature type="transmembrane region" description="Helical" evidence="2">
    <location>
        <begin position="286"/>
        <end position="306"/>
    </location>
</feature>
<feature type="topological domain" description="Extracellular" evidence="2">
    <location>
        <begin position="307"/>
        <end position="325"/>
    </location>
</feature>
<feature type="transmembrane region" description="Helical" evidence="2">
    <location>
        <begin position="326"/>
        <end position="346"/>
    </location>
</feature>
<feature type="topological domain" description="Cytoplasmic" evidence="2">
    <location>
        <begin position="347"/>
        <end position="352"/>
    </location>
</feature>
<feature type="transmembrane region" description="Helical" evidence="2">
    <location>
        <begin position="353"/>
        <end position="373"/>
    </location>
</feature>
<feature type="topological domain" description="Extracellular" evidence="2">
    <location>
        <begin position="374"/>
        <end position="387"/>
    </location>
</feature>
<feature type="transmembrane region" description="Helical" evidence="2">
    <location>
        <begin position="388"/>
        <end position="408"/>
    </location>
</feature>
<feature type="topological domain" description="Cytoplasmic" evidence="2">
    <location>
        <begin position="409"/>
        <end position="456"/>
    </location>
</feature>
<feature type="transmembrane region" description="Helical" evidence="2">
    <location>
        <begin position="457"/>
        <end position="477"/>
    </location>
</feature>
<feature type="topological domain" description="Extracellular" evidence="2">
    <location>
        <begin position="478"/>
        <end position="540"/>
    </location>
</feature>
<feature type="region of interest" description="Disordered" evidence="3">
    <location>
        <begin position="519"/>
        <end position="540"/>
    </location>
</feature>
<feature type="compositionally biased region" description="Basic and acidic residues" evidence="3">
    <location>
        <begin position="528"/>
        <end position="540"/>
    </location>
</feature>
<name>QUTD_ASPCL</name>
<keyword id="KW-1003">Cell membrane</keyword>
<keyword id="KW-0472">Membrane</keyword>
<keyword id="KW-0672">Quinate metabolism</keyword>
<keyword id="KW-1185">Reference proteome</keyword>
<keyword id="KW-0812">Transmembrane</keyword>
<keyword id="KW-1133">Transmembrane helix</keyword>
<keyword id="KW-0813">Transport</keyword>
<keyword id="KW-0832">Ubl conjugation</keyword>
<organism>
    <name type="scientific">Aspergillus clavatus (strain ATCC 1007 / CBS 513.65 / DSM 816 / NCTC 3887 / NRRL 1 / QM 1276 / 107)</name>
    <dbReference type="NCBI Taxonomy" id="344612"/>
    <lineage>
        <taxon>Eukaryota</taxon>
        <taxon>Fungi</taxon>
        <taxon>Dikarya</taxon>
        <taxon>Ascomycota</taxon>
        <taxon>Pezizomycotina</taxon>
        <taxon>Eurotiomycetes</taxon>
        <taxon>Eurotiomycetidae</taxon>
        <taxon>Eurotiales</taxon>
        <taxon>Aspergillaceae</taxon>
        <taxon>Aspergillus</taxon>
        <taxon>Aspergillus subgen. Fumigati</taxon>
    </lineage>
</organism>
<reference key="1">
    <citation type="journal article" date="2008" name="PLoS Genet.">
        <title>Genomic islands in the pathogenic filamentous fungus Aspergillus fumigatus.</title>
        <authorList>
            <person name="Fedorova N.D."/>
            <person name="Khaldi N."/>
            <person name="Joardar V.S."/>
            <person name="Maiti R."/>
            <person name="Amedeo P."/>
            <person name="Anderson M.J."/>
            <person name="Crabtree J."/>
            <person name="Silva J.C."/>
            <person name="Badger J.H."/>
            <person name="Albarraq A."/>
            <person name="Angiuoli S."/>
            <person name="Bussey H."/>
            <person name="Bowyer P."/>
            <person name="Cotty P.J."/>
            <person name="Dyer P.S."/>
            <person name="Egan A."/>
            <person name="Galens K."/>
            <person name="Fraser-Liggett C.M."/>
            <person name="Haas B.J."/>
            <person name="Inman J.M."/>
            <person name="Kent R."/>
            <person name="Lemieux S."/>
            <person name="Malavazi I."/>
            <person name="Orvis J."/>
            <person name="Roemer T."/>
            <person name="Ronning C.M."/>
            <person name="Sundaram J.P."/>
            <person name="Sutton G."/>
            <person name="Turner G."/>
            <person name="Venter J.C."/>
            <person name="White O.R."/>
            <person name="Whitty B.R."/>
            <person name="Youngman P."/>
            <person name="Wolfe K.H."/>
            <person name="Goldman G.H."/>
            <person name="Wortman J.R."/>
            <person name="Jiang B."/>
            <person name="Denning D.W."/>
            <person name="Nierman W.C."/>
        </authorList>
    </citation>
    <scope>NUCLEOTIDE SEQUENCE [LARGE SCALE GENOMIC DNA]</scope>
    <source>
        <strain>ATCC 1007 / CBS 513.65 / DSM 816 / NCTC 3887 / NRRL 1 / QM 1276 / 107</strain>
    </source>
</reference>
<evidence type="ECO:0000250" key="1"/>
<evidence type="ECO:0000255" key="2"/>
<evidence type="ECO:0000256" key="3">
    <source>
        <dbReference type="SAM" id="MobiDB-lite"/>
    </source>
</evidence>
<evidence type="ECO:0000305" key="4"/>
<accession>A1CPX0</accession>
<protein>
    <recommendedName>
        <fullName>Probable quinate permease</fullName>
    </recommendedName>
    <alternativeName>
        <fullName>Quinate transporter</fullName>
    </alternativeName>
</protein>
<comment type="function">
    <text evidence="1">Integral membrane transporter that imports quinic acid to be catabolized as a carbon source.</text>
</comment>
<comment type="subunit">
    <text evidence="1">Interacts with creB.</text>
</comment>
<comment type="subcellular location">
    <subcellularLocation>
        <location>Cell membrane</location>
        <topology>Multi-pass membrane protein</topology>
    </subcellularLocation>
    <subcellularLocation>
        <location evidence="4">Cell membrane</location>
    </subcellularLocation>
</comment>
<comment type="PTM">
    <text>Ubiquitinated. Deubiquitinated by creB, probably to control its activity or amount.</text>
</comment>
<comment type="similarity">
    <text evidence="4">Belongs to the major facilitator superfamily. Sugar transporter (TC 2.A.1.1) family.</text>
</comment>
<proteinExistence type="inferred from homology"/>